<reference key="1">
    <citation type="journal article" date="1999" name="Mol. Biochem. Parasitol.">
        <title>Characterisation and expression of the carbamate kinase gene from Giardia intestinalis.</title>
        <authorList>
            <person name="Minotto L."/>
            <person name="Tutticci E.A."/>
            <person name="Bagnara A.S."/>
            <person name="Schofield P.J."/>
            <person name="Edwards M.R."/>
        </authorList>
    </citation>
    <scope>NUCLEOTIDE SEQUENCE [GENOMIC DNA]</scope>
    <scope>IDENTIFICATION BY MASS SPECTROMETRY</scope>
    <scope>CHARACTERIZATION</scope>
    <source>
        <strain>Portland-1</strain>
    </source>
</reference>
<feature type="chain" id="PRO_0000185152" description="Carbamate kinase">
    <location>
        <begin position="1"/>
        <end position="317"/>
    </location>
</feature>
<accession>O97438</accession>
<sequence length="317" mass="34221">MSAGKTVVIALGGNAMLQAKEKGDYDTQRKNVEIAASEIYKIHKAGYKVVLTSGNAPQVGAIKLQNQAAAGVSPEMPLHVCGAMSQGFIGYMMSQAMDNVFCANNEPANCVTCVTQTLVDPKDQAFTNPTKPRWRFYTEQEAKDLMAANPGKILREDAWPAGWRVVVPSPRPLEIVEYGVIKTLIDNNVLVICTNGGGIPCKRENKVISGVDAVIDKDLATSLLAKTLNSDYLMILTDVLNACINYKKPDERKLEEIKLSEILALEKDGHFAAGSMGPKVRAAIEFTQATGKMSIITSLSTAVDALNGKCGTRIIKD</sequence>
<dbReference type="EC" id="2.7.2.2"/>
<dbReference type="EMBL" id="AF017784">
    <property type="protein sequence ID" value="AAD13336.1"/>
    <property type="molecule type" value="Genomic_DNA"/>
</dbReference>
<dbReference type="SMR" id="O97438"/>
<dbReference type="BindingDB" id="O97438"/>
<dbReference type="ChEMBL" id="CHEMBL4802003"/>
<dbReference type="DrugCentral" id="O97438"/>
<dbReference type="VEuPathDB" id="GiardiaDB:DHA2_16453"/>
<dbReference type="VEuPathDB" id="GiardiaDB:GL50581_2343"/>
<dbReference type="VEuPathDB" id="GiardiaDB:GL50803_0016453"/>
<dbReference type="VEuPathDB" id="GiardiaDB:QR46_2054"/>
<dbReference type="eggNOG" id="ENOG502S00U">
    <property type="taxonomic scope" value="Eukaryota"/>
</dbReference>
<dbReference type="BioCyc" id="MetaCyc:MONOMER-11204"/>
<dbReference type="BRENDA" id="2.7.2.2">
    <property type="organism ID" value="2401"/>
</dbReference>
<dbReference type="UniPathway" id="UPA00996">
    <property type="reaction ID" value="UER00366"/>
</dbReference>
<dbReference type="GO" id="GO:0005829">
    <property type="term" value="C:cytosol"/>
    <property type="evidence" value="ECO:0007669"/>
    <property type="project" value="TreeGrafter"/>
</dbReference>
<dbReference type="GO" id="GO:0005524">
    <property type="term" value="F:ATP binding"/>
    <property type="evidence" value="ECO:0007669"/>
    <property type="project" value="UniProtKB-KW"/>
</dbReference>
<dbReference type="GO" id="GO:0008804">
    <property type="term" value="F:carbamate kinase activity"/>
    <property type="evidence" value="ECO:0007669"/>
    <property type="project" value="UniProtKB-EC"/>
</dbReference>
<dbReference type="GO" id="GO:0019546">
    <property type="term" value="P:arginine deiminase pathway"/>
    <property type="evidence" value="ECO:0007669"/>
    <property type="project" value="TreeGrafter"/>
</dbReference>
<dbReference type="CDD" id="cd04235">
    <property type="entry name" value="AAK_CK"/>
    <property type="match status" value="1"/>
</dbReference>
<dbReference type="FunFam" id="3.40.1160.10:FF:000007">
    <property type="entry name" value="Carbamate kinase"/>
    <property type="match status" value="1"/>
</dbReference>
<dbReference type="Gene3D" id="3.40.1160.10">
    <property type="entry name" value="Acetylglutamate kinase-like"/>
    <property type="match status" value="1"/>
</dbReference>
<dbReference type="InterPro" id="IPR036393">
    <property type="entry name" value="AceGlu_kinase-like_sf"/>
</dbReference>
<dbReference type="InterPro" id="IPR001048">
    <property type="entry name" value="Asp/Glu/Uridylate_kinase"/>
</dbReference>
<dbReference type="InterPro" id="IPR003964">
    <property type="entry name" value="Carb_kinase"/>
</dbReference>
<dbReference type="NCBIfam" id="TIGR00746">
    <property type="entry name" value="arcC"/>
    <property type="match status" value="1"/>
</dbReference>
<dbReference type="NCBIfam" id="NF009007">
    <property type="entry name" value="PRK12352.1"/>
    <property type="match status" value="1"/>
</dbReference>
<dbReference type="PANTHER" id="PTHR30409">
    <property type="entry name" value="CARBAMATE KINASE"/>
    <property type="match status" value="1"/>
</dbReference>
<dbReference type="PANTHER" id="PTHR30409:SF1">
    <property type="entry name" value="CARBAMATE KINASE-RELATED"/>
    <property type="match status" value="1"/>
</dbReference>
<dbReference type="Pfam" id="PF00696">
    <property type="entry name" value="AA_kinase"/>
    <property type="match status" value="1"/>
</dbReference>
<dbReference type="PIRSF" id="PIRSF000723">
    <property type="entry name" value="Carbamate_kin"/>
    <property type="match status" value="1"/>
</dbReference>
<dbReference type="PRINTS" id="PR01469">
    <property type="entry name" value="CARBMTKINASE"/>
</dbReference>
<dbReference type="SUPFAM" id="SSF53633">
    <property type="entry name" value="Carbamate kinase-like"/>
    <property type="match status" value="1"/>
</dbReference>
<proteinExistence type="evidence at protein level"/>
<gene>
    <name type="primary">CBK</name>
</gene>
<protein>
    <recommendedName>
        <fullName>Carbamate kinase</fullName>
        <ecNumber>2.7.2.2</ecNumber>
    </recommendedName>
</protein>
<organism>
    <name type="scientific">Giardia intestinalis</name>
    <name type="common">Giardia lamblia</name>
    <dbReference type="NCBI Taxonomy" id="5741"/>
    <lineage>
        <taxon>Eukaryota</taxon>
        <taxon>Metamonada</taxon>
        <taxon>Diplomonadida</taxon>
        <taxon>Hexamitidae</taxon>
        <taxon>Giardiinae</taxon>
        <taxon>Giardia</taxon>
    </lineage>
</organism>
<keyword id="KW-0056">Arginine metabolism</keyword>
<keyword id="KW-0067">ATP-binding</keyword>
<keyword id="KW-0418">Kinase</keyword>
<keyword id="KW-0547">Nucleotide-binding</keyword>
<keyword id="KW-0808">Transferase</keyword>
<evidence type="ECO:0000305" key="1"/>
<name>CBK_GIAIN</name>
<comment type="catalytic activity">
    <reaction>
        <text>hydrogencarbonate + NH4(+) + ATP = carbamoyl phosphate + ADP + H2O + H(+)</text>
        <dbReference type="Rhea" id="RHEA:10152"/>
        <dbReference type="ChEBI" id="CHEBI:15377"/>
        <dbReference type="ChEBI" id="CHEBI:15378"/>
        <dbReference type="ChEBI" id="CHEBI:17544"/>
        <dbReference type="ChEBI" id="CHEBI:28938"/>
        <dbReference type="ChEBI" id="CHEBI:30616"/>
        <dbReference type="ChEBI" id="CHEBI:58228"/>
        <dbReference type="ChEBI" id="CHEBI:456216"/>
        <dbReference type="EC" id="2.7.2.2"/>
    </reaction>
</comment>
<comment type="pathway">
    <text>Metabolic intermediate metabolism; carbamoyl phosphate degradation; CO(2) and NH(3) from carbamoyl phosphate: step 1/1.</text>
</comment>
<comment type="subunit">
    <text>Homodimer.</text>
</comment>
<comment type="similarity">
    <text evidence="1">Belongs to the carbamate kinase family.</text>
</comment>